<proteinExistence type="predicted"/>
<reference key="1">
    <citation type="journal article" date="1996" name="Science">
        <title>Complete genome sequence of the methanogenic archaeon, Methanococcus jannaschii.</title>
        <authorList>
            <person name="Bult C.J."/>
            <person name="White O."/>
            <person name="Olsen G.J."/>
            <person name="Zhou L."/>
            <person name="Fleischmann R.D."/>
            <person name="Sutton G.G."/>
            <person name="Blake J.A."/>
            <person name="FitzGerald L.M."/>
            <person name="Clayton R.A."/>
            <person name="Gocayne J.D."/>
            <person name="Kerlavage A.R."/>
            <person name="Dougherty B.A."/>
            <person name="Tomb J.-F."/>
            <person name="Adams M.D."/>
            <person name="Reich C.I."/>
            <person name="Overbeek R."/>
            <person name="Kirkness E.F."/>
            <person name="Weinstock K.G."/>
            <person name="Merrick J.M."/>
            <person name="Glodek A."/>
            <person name="Scott J.L."/>
            <person name="Geoghagen N.S.M."/>
            <person name="Weidman J.F."/>
            <person name="Fuhrmann J.L."/>
            <person name="Nguyen D."/>
            <person name="Utterback T.R."/>
            <person name="Kelley J.M."/>
            <person name="Peterson J.D."/>
            <person name="Sadow P.W."/>
            <person name="Hanna M.C."/>
            <person name="Cotton M.D."/>
            <person name="Roberts K.M."/>
            <person name="Hurst M.A."/>
            <person name="Kaine B.P."/>
            <person name="Borodovsky M."/>
            <person name="Klenk H.-P."/>
            <person name="Fraser C.M."/>
            <person name="Smith H.O."/>
            <person name="Woese C.R."/>
            <person name="Venter J.C."/>
        </authorList>
    </citation>
    <scope>NUCLEOTIDE SEQUENCE [LARGE SCALE GENOMIC DNA]</scope>
    <source>
        <strain>ATCC 43067 / DSM 2661 / JAL-1 / JCM 10045 / NBRC 100440</strain>
    </source>
</reference>
<gene>
    <name type="ordered locus">MJ0998</name>
</gene>
<evidence type="ECO:0000255" key="1"/>
<evidence type="ECO:0000305" key="2"/>
<comment type="subcellular location">
    <subcellularLocation>
        <location evidence="2">Cell membrane</location>
        <topology evidence="2">Multi-pass membrane protein</topology>
    </subcellularLocation>
</comment>
<organism>
    <name type="scientific">Methanocaldococcus jannaschii (strain ATCC 43067 / DSM 2661 / JAL-1 / JCM 10045 / NBRC 100440)</name>
    <name type="common">Methanococcus jannaschii</name>
    <dbReference type="NCBI Taxonomy" id="243232"/>
    <lineage>
        <taxon>Archaea</taxon>
        <taxon>Methanobacteriati</taxon>
        <taxon>Methanobacteriota</taxon>
        <taxon>Methanomada group</taxon>
        <taxon>Methanococci</taxon>
        <taxon>Methanococcales</taxon>
        <taxon>Methanocaldococcaceae</taxon>
        <taxon>Methanocaldococcus</taxon>
    </lineage>
</organism>
<accession>Q58404</accession>
<keyword id="KW-1003">Cell membrane</keyword>
<keyword id="KW-0472">Membrane</keyword>
<keyword id="KW-1185">Reference proteome</keyword>
<keyword id="KW-0812">Transmembrane</keyword>
<keyword id="KW-1133">Transmembrane helix</keyword>
<name>Y998_METJA</name>
<dbReference type="EMBL" id="L77117">
    <property type="protein sequence ID" value="AAB99006.1"/>
    <property type="molecule type" value="Genomic_DNA"/>
</dbReference>
<dbReference type="PIR" id="E64424">
    <property type="entry name" value="E64424"/>
</dbReference>
<dbReference type="SMR" id="Q58404"/>
<dbReference type="PaxDb" id="243232-MJ_0998"/>
<dbReference type="EnsemblBacteria" id="AAB99006">
    <property type="protein sequence ID" value="AAB99006"/>
    <property type="gene ID" value="MJ_0998"/>
</dbReference>
<dbReference type="KEGG" id="mja:MJ_0998"/>
<dbReference type="HOGENOM" id="CLU_1149815_0_0_2"/>
<dbReference type="InParanoid" id="Q58404"/>
<dbReference type="Proteomes" id="UP000000805">
    <property type="component" value="Chromosome"/>
</dbReference>
<dbReference type="GO" id="GO:0005886">
    <property type="term" value="C:plasma membrane"/>
    <property type="evidence" value="ECO:0007669"/>
    <property type="project" value="UniProtKB-SubCell"/>
</dbReference>
<sequence>MKSLYALIFLLFVIVVSYIFNGLWSVFNIKHVFWVNLFLLIAFHPQHLDGLIILLLIPLKIFSNFKLKLQCIIALVGILLTIIKGVIKSGFGWILRILFFFVRMMTVSFINLVVFSILLTSVYVLGYVAFLKPDDIQFGTLYTAFGGLALLGAGIKIIQHFIKQSEEIAQEEFKKWYETEVKNFMYSLFITAKNAFPKFLDDLLAKGVVSQEEYQNLIKLYSHILARILKNDEEKMKIPTF</sequence>
<protein>
    <recommendedName>
        <fullName>Uncharacterized protein MJ0998</fullName>
    </recommendedName>
</protein>
<feature type="chain" id="PRO_0000107137" description="Uncharacterized protein MJ0998">
    <location>
        <begin position="1"/>
        <end position="241"/>
    </location>
</feature>
<feature type="transmembrane region" description="Helical" evidence="1">
    <location>
        <begin position="7"/>
        <end position="27"/>
    </location>
</feature>
<feature type="transmembrane region" description="Helical" evidence="1">
    <location>
        <begin position="37"/>
        <end position="57"/>
    </location>
</feature>
<feature type="transmembrane region" description="Helical" evidence="1">
    <location>
        <begin position="72"/>
        <end position="92"/>
    </location>
</feature>
<feature type="transmembrane region" description="Helical" evidence="1">
    <location>
        <begin position="110"/>
        <end position="130"/>
    </location>
</feature>
<feature type="transmembrane region" description="Helical" evidence="1">
    <location>
        <begin position="138"/>
        <end position="158"/>
    </location>
</feature>